<keyword id="KW-0413">Isomerase</keyword>
<keyword id="KW-1185">Reference proteome</keyword>
<name>RPIA_ECO55</name>
<sequence>MTQDELKKAVGWAALQYVQPGTIVGVGTGSTAAHFIDALGTMKGQIEGAVSSSDASTEKLKSLGIHVFDLNEVDSLGIYVDGADEINGHMQMIKGGGAALTREKIIASVAEKFICIADASKQVDILGKFPLPVEVIPMARSAVARQLVKLGGRPEYRQGVVTDNGNVILDVHGMEILDPIAMENAINAIPGVVTVGLFANRGADVALIGTPDGVKTIVK</sequence>
<gene>
    <name evidence="1" type="primary">rpiA</name>
    <name type="ordered locus">EC55989_3202</name>
</gene>
<accession>B7LFH2</accession>
<reference key="1">
    <citation type="journal article" date="2009" name="PLoS Genet.">
        <title>Organised genome dynamics in the Escherichia coli species results in highly diverse adaptive paths.</title>
        <authorList>
            <person name="Touchon M."/>
            <person name="Hoede C."/>
            <person name="Tenaillon O."/>
            <person name="Barbe V."/>
            <person name="Baeriswyl S."/>
            <person name="Bidet P."/>
            <person name="Bingen E."/>
            <person name="Bonacorsi S."/>
            <person name="Bouchier C."/>
            <person name="Bouvet O."/>
            <person name="Calteau A."/>
            <person name="Chiapello H."/>
            <person name="Clermont O."/>
            <person name="Cruveiller S."/>
            <person name="Danchin A."/>
            <person name="Diard M."/>
            <person name="Dossat C."/>
            <person name="Karoui M.E."/>
            <person name="Frapy E."/>
            <person name="Garry L."/>
            <person name="Ghigo J.M."/>
            <person name="Gilles A.M."/>
            <person name="Johnson J."/>
            <person name="Le Bouguenec C."/>
            <person name="Lescat M."/>
            <person name="Mangenot S."/>
            <person name="Martinez-Jehanne V."/>
            <person name="Matic I."/>
            <person name="Nassif X."/>
            <person name="Oztas S."/>
            <person name="Petit M.A."/>
            <person name="Pichon C."/>
            <person name="Rouy Z."/>
            <person name="Ruf C.S."/>
            <person name="Schneider D."/>
            <person name="Tourret J."/>
            <person name="Vacherie B."/>
            <person name="Vallenet D."/>
            <person name="Medigue C."/>
            <person name="Rocha E.P.C."/>
            <person name="Denamur E."/>
        </authorList>
    </citation>
    <scope>NUCLEOTIDE SEQUENCE [LARGE SCALE GENOMIC DNA]</scope>
    <source>
        <strain>55989 / EAEC</strain>
    </source>
</reference>
<evidence type="ECO:0000255" key="1">
    <source>
        <dbReference type="HAMAP-Rule" id="MF_00170"/>
    </source>
</evidence>
<proteinExistence type="inferred from homology"/>
<organism>
    <name type="scientific">Escherichia coli (strain 55989 / EAEC)</name>
    <dbReference type="NCBI Taxonomy" id="585055"/>
    <lineage>
        <taxon>Bacteria</taxon>
        <taxon>Pseudomonadati</taxon>
        <taxon>Pseudomonadota</taxon>
        <taxon>Gammaproteobacteria</taxon>
        <taxon>Enterobacterales</taxon>
        <taxon>Enterobacteriaceae</taxon>
        <taxon>Escherichia</taxon>
    </lineage>
</organism>
<protein>
    <recommendedName>
        <fullName evidence="1">Ribose-5-phosphate isomerase A</fullName>
        <ecNumber evidence="1">5.3.1.6</ecNumber>
    </recommendedName>
    <alternativeName>
        <fullName evidence="1">Phosphoriboisomerase A</fullName>
        <shortName evidence="1">PRI</shortName>
    </alternativeName>
</protein>
<comment type="function">
    <text evidence="1">Catalyzes the reversible conversion of ribose-5-phosphate to ribulose 5-phosphate.</text>
</comment>
<comment type="catalytic activity">
    <reaction evidence="1">
        <text>aldehydo-D-ribose 5-phosphate = D-ribulose 5-phosphate</text>
        <dbReference type="Rhea" id="RHEA:14657"/>
        <dbReference type="ChEBI" id="CHEBI:58121"/>
        <dbReference type="ChEBI" id="CHEBI:58273"/>
        <dbReference type="EC" id="5.3.1.6"/>
    </reaction>
</comment>
<comment type="pathway">
    <text evidence="1">Carbohydrate degradation; pentose phosphate pathway; D-ribose 5-phosphate from D-ribulose 5-phosphate (non-oxidative stage): step 1/1.</text>
</comment>
<comment type="subunit">
    <text evidence="1">Homodimer.</text>
</comment>
<comment type="similarity">
    <text evidence="1">Belongs to the ribose 5-phosphate isomerase family.</text>
</comment>
<feature type="chain" id="PRO_1000194702" description="Ribose-5-phosphate isomerase A">
    <location>
        <begin position="1"/>
        <end position="219"/>
    </location>
</feature>
<feature type="active site" description="Proton acceptor" evidence="1">
    <location>
        <position position="103"/>
    </location>
</feature>
<feature type="binding site" evidence="1">
    <location>
        <begin position="28"/>
        <end position="31"/>
    </location>
    <ligand>
        <name>substrate</name>
    </ligand>
</feature>
<feature type="binding site" evidence="1">
    <location>
        <begin position="81"/>
        <end position="84"/>
    </location>
    <ligand>
        <name>substrate</name>
    </ligand>
</feature>
<feature type="binding site" evidence="1">
    <location>
        <begin position="94"/>
        <end position="97"/>
    </location>
    <ligand>
        <name>substrate</name>
    </ligand>
</feature>
<feature type="binding site" evidence="1">
    <location>
        <position position="121"/>
    </location>
    <ligand>
        <name>substrate</name>
    </ligand>
</feature>
<dbReference type="EC" id="5.3.1.6" evidence="1"/>
<dbReference type="EMBL" id="CU928145">
    <property type="protein sequence ID" value="CAU99173.1"/>
    <property type="molecule type" value="Genomic_DNA"/>
</dbReference>
<dbReference type="RefSeq" id="WP_000189743.1">
    <property type="nucleotide sequence ID" value="NZ_CP028304.1"/>
</dbReference>
<dbReference type="SMR" id="B7LFH2"/>
<dbReference type="GeneID" id="93779085"/>
<dbReference type="KEGG" id="eck:EC55989_3202"/>
<dbReference type="HOGENOM" id="CLU_056590_1_1_6"/>
<dbReference type="UniPathway" id="UPA00115">
    <property type="reaction ID" value="UER00412"/>
</dbReference>
<dbReference type="Proteomes" id="UP000000746">
    <property type="component" value="Chromosome"/>
</dbReference>
<dbReference type="GO" id="GO:0005829">
    <property type="term" value="C:cytosol"/>
    <property type="evidence" value="ECO:0007669"/>
    <property type="project" value="TreeGrafter"/>
</dbReference>
<dbReference type="GO" id="GO:0004751">
    <property type="term" value="F:ribose-5-phosphate isomerase activity"/>
    <property type="evidence" value="ECO:0007669"/>
    <property type="project" value="UniProtKB-UniRule"/>
</dbReference>
<dbReference type="GO" id="GO:0006014">
    <property type="term" value="P:D-ribose metabolic process"/>
    <property type="evidence" value="ECO:0007669"/>
    <property type="project" value="TreeGrafter"/>
</dbReference>
<dbReference type="GO" id="GO:0009052">
    <property type="term" value="P:pentose-phosphate shunt, non-oxidative branch"/>
    <property type="evidence" value="ECO:0007669"/>
    <property type="project" value="UniProtKB-UniRule"/>
</dbReference>
<dbReference type="CDD" id="cd01398">
    <property type="entry name" value="RPI_A"/>
    <property type="match status" value="1"/>
</dbReference>
<dbReference type="FunFam" id="3.30.70.260:FF:000004">
    <property type="entry name" value="Ribose-5-phosphate isomerase A"/>
    <property type="match status" value="1"/>
</dbReference>
<dbReference type="FunFam" id="3.40.50.1360:FF:000001">
    <property type="entry name" value="Ribose-5-phosphate isomerase A"/>
    <property type="match status" value="1"/>
</dbReference>
<dbReference type="Gene3D" id="3.30.70.260">
    <property type="match status" value="1"/>
</dbReference>
<dbReference type="Gene3D" id="3.40.50.1360">
    <property type="match status" value="1"/>
</dbReference>
<dbReference type="HAMAP" id="MF_00170">
    <property type="entry name" value="Rib_5P_isom_A"/>
    <property type="match status" value="1"/>
</dbReference>
<dbReference type="InterPro" id="IPR037171">
    <property type="entry name" value="NagB/RpiA_transferase-like"/>
</dbReference>
<dbReference type="InterPro" id="IPR020672">
    <property type="entry name" value="Ribose5P_isomerase_typA_subgr"/>
</dbReference>
<dbReference type="InterPro" id="IPR004788">
    <property type="entry name" value="Ribose5P_isomerase_type_A"/>
</dbReference>
<dbReference type="NCBIfam" id="NF001924">
    <property type="entry name" value="PRK00702.1"/>
    <property type="match status" value="1"/>
</dbReference>
<dbReference type="NCBIfam" id="TIGR00021">
    <property type="entry name" value="rpiA"/>
    <property type="match status" value="1"/>
</dbReference>
<dbReference type="PANTHER" id="PTHR11934">
    <property type="entry name" value="RIBOSE-5-PHOSPHATE ISOMERASE"/>
    <property type="match status" value="1"/>
</dbReference>
<dbReference type="PANTHER" id="PTHR11934:SF0">
    <property type="entry name" value="RIBOSE-5-PHOSPHATE ISOMERASE"/>
    <property type="match status" value="1"/>
</dbReference>
<dbReference type="Pfam" id="PF06026">
    <property type="entry name" value="Rib_5-P_isom_A"/>
    <property type="match status" value="1"/>
</dbReference>
<dbReference type="SUPFAM" id="SSF75445">
    <property type="entry name" value="D-ribose-5-phosphate isomerase (RpiA), lid domain"/>
    <property type="match status" value="1"/>
</dbReference>
<dbReference type="SUPFAM" id="SSF100950">
    <property type="entry name" value="NagB/RpiA/CoA transferase-like"/>
    <property type="match status" value="1"/>
</dbReference>